<reference key="1">
    <citation type="journal article" date="2000" name="Eur. J. Biochem.">
        <title>Biochemical and molecular characterization of taurine:pyruvate aminotransferase from the anaerobe Bilophila wadsworthia.</title>
        <authorList>
            <person name="Laue H."/>
            <person name="Cook A.M."/>
        </authorList>
    </citation>
    <scope>NUCLEOTIDE SEQUENCE [GENOMIC DNA]</scope>
    <scope>PROTEIN SEQUENCE OF 2-28; 101-119 AND 363-372</scope>
    <scope>FUNCTION</scope>
    <scope>CATALYTIC ACTIVITY</scope>
    <scope>COFACTOR</scope>
    <scope>BIOPHYSICOCHEMICAL PROPERTIES</scope>
    <scope>SUBSTRATE SPECIFICITY</scope>
    <scope>PATHWAY</scope>
    <scope>SUBUNIT</scope>
    <scope>SUBCELLULAR LOCATION</scope>
    <source>
        <strain>DSM 11045 / RZATAU</strain>
    </source>
</reference>
<feature type="initiator methionine" description="Removed" evidence="2">
    <location>
        <position position="1"/>
    </location>
</feature>
<feature type="chain" id="PRO_0000120534" description="Taurine--pyruvate aminotransferase">
    <location>
        <begin position="2"/>
        <end position="456"/>
    </location>
</feature>
<feature type="modified residue" description="N6-(pyridoxal phosphate)lysine" evidence="1">
    <location>
        <position position="280"/>
    </location>
</feature>
<name>TPA_BILWA</name>
<accession>Q9APM5</accession>
<proteinExistence type="evidence at protein level"/>
<organism>
    <name type="scientific">Bilophila wadsworthia</name>
    <dbReference type="NCBI Taxonomy" id="35833"/>
    <lineage>
        <taxon>Bacteria</taxon>
        <taxon>Pseudomonadati</taxon>
        <taxon>Thermodesulfobacteriota</taxon>
        <taxon>Desulfovibrionia</taxon>
        <taxon>Desulfovibrionales</taxon>
        <taxon>Desulfovibrionaceae</taxon>
        <taxon>Bilophila</taxon>
    </lineage>
</organism>
<gene>
    <name evidence="3" type="primary">tpa</name>
</gene>
<protein>
    <recommendedName>
        <fullName evidence="5">Taurine--pyruvate aminotransferase</fullName>
        <ecNumber evidence="2">2.6.1.77</ecNumber>
    </recommendedName>
    <alternativeName>
        <fullName evidence="3">Taurine:pyruvate aminotransferase</fullName>
    </alternativeName>
</protein>
<sequence length="456" mass="49721">MTYDKAELVALDKKYVWHHLTQHKNFEPAIYVKGEGMRITDIDGKTYLDAVSGGVWTVNVGYGRKEIVDAVAKQMMEMCYFANGIGNVPTIKFSEKLISKMPGMSRVYLSNSGSEANEKAFKIVRQIGQLKHGGKKTGILYRARDYHGTTIGTLSACGQFERKVQYGPFAPGFYEFPDCDVYRSKFGDCADLGVKMAKQLEEVILTVGPDELGAVIVEPMTAGGGILVPPAGYYETIREICDKYELLLIIDEVVCGLGRTGKWFGYQHFNVQPDIVTMAKGVASGYAPISCTVTTEKVFQDFVNDPADTDAYFRDISTFGGCTSGPAAALANIEIIERENLLENCTKMGDRLLEGLKGLMAKHPIIGDVRGKGLFAGIEIVKDRATKEPIAEAVANAMVGAAKQAGVLIGKTSRSFREFNNTLTLCPALIATEADIDEIVAGIDKAFTTVEQKFGL</sequence>
<evidence type="ECO:0000250" key="1">
    <source>
        <dbReference type="UniProtKB" id="P42588"/>
    </source>
</evidence>
<evidence type="ECO:0000269" key="2">
    <source>
    </source>
</evidence>
<evidence type="ECO:0000303" key="3">
    <source>
    </source>
</evidence>
<evidence type="ECO:0000305" key="4"/>
<evidence type="ECO:0000305" key="5">
    <source>
    </source>
</evidence>
<dbReference type="EC" id="2.6.1.77" evidence="2"/>
<dbReference type="EMBL" id="AF269146">
    <property type="protein sequence ID" value="AAG50296.1"/>
    <property type="molecule type" value="Genomic_DNA"/>
</dbReference>
<dbReference type="RefSeq" id="WP_005028753.1">
    <property type="nucleotide sequence ID" value="NZ_JBGKTC010000004.1"/>
</dbReference>
<dbReference type="SMR" id="Q9APM5"/>
<dbReference type="KEGG" id="ag:AAG50296"/>
<dbReference type="BioCyc" id="MetaCyc:MONOMER-2981"/>
<dbReference type="BRENDA" id="2.6.1.77">
    <property type="organism ID" value="856"/>
</dbReference>
<dbReference type="SABIO-RK" id="Q9APM5"/>
<dbReference type="UniPathway" id="UPA00338"/>
<dbReference type="GO" id="GO:0005829">
    <property type="term" value="C:cytosol"/>
    <property type="evidence" value="ECO:0007669"/>
    <property type="project" value="TreeGrafter"/>
</dbReference>
<dbReference type="GO" id="GO:0016223">
    <property type="term" value="F:beta-alanine:pyruvate transaminase activity"/>
    <property type="evidence" value="ECO:0007669"/>
    <property type="project" value="RHEA"/>
</dbReference>
<dbReference type="GO" id="GO:0030170">
    <property type="term" value="F:pyridoxal phosphate binding"/>
    <property type="evidence" value="ECO:0007669"/>
    <property type="project" value="InterPro"/>
</dbReference>
<dbReference type="GO" id="GO:0031299">
    <property type="term" value="F:taurine-pyruvate aminotransferase activity"/>
    <property type="evidence" value="ECO:0007669"/>
    <property type="project" value="UniProtKB-EC"/>
</dbReference>
<dbReference type="GO" id="GO:0046306">
    <property type="term" value="P:alkanesulfonate catabolic process"/>
    <property type="evidence" value="ECO:0007669"/>
    <property type="project" value="UniProtKB-UniPathway"/>
</dbReference>
<dbReference type="CDD" id="cd00610">
    <property type="entry name" value="OAT_like"/>
    <property type="match status" value="1"/>
</dbReference>
<dbReference type="FunFam" id="3.40.640.10:FF:000004">
    <property type="entry name" value="Acetylornithine aminotransferase"/>
    <property type="match status" value="1"/>
</dbReference>
<dbReference type="Gene3D" id="3.90.1150.10">
    <property type="entry name" value="Aspartate Aminotransferase, domain 1"/>
    <property type="match status" value="1"/>
</dbReference>
<dbReference type="Gene3D" id="3.40.640.10">
    <property type="entry name" value="Type I PLP-dependent aspartate aminotransferase-like (Major domain)"/>
    <property type="match status" value="1"/>
</dbReference>
<dbReference type="InterPro" id="IPR005814">
    <property type="entry name" value="Aminotrans_3"/>
</dbReference>
<dbReference type="InterPro" id="IPR049704">
    <property type="entry name" value="Aminotrans_3_PPA_site"/>
</dbReference>
<dbReference type="InterPro" id="IPR015424">
    <property type="entry name" value="PyrdxlP-dep_Trfase"/>
</dbReference>
<dbReference type="InterPro" id="IPR015421">
    <property type="entry name" value="PyrdxlP-dep_Trfase_major"/>
</dbReference>
<dbReference type="InterPro" id="IPR015422">
    <property type="entry name" value="PyrdxlP-dep_Trfase_small"/>
</dbReference>
<dbReference type="PANTHER" id="PTHR43094">
    <property type="entry name" value="AMINOTRANSFERASE"/>
    <property type="match status" value="1"/>
</dbReference>
<dbReference type="PANTHER" id="PTHR43094:SF1">
    <property type="entry name" value="AMINOTRANSFERASE CLASS-III"/>
    <property type="match status" value="1"/>
</dbReference>
<dbReference type="Pfam" id="PF00202">
    <property type="entry name" value="Aminotran_3"/>
    <property type="match status" value="1"/>
</dbReference>
<dbReference type="PIRSF" id="PIRSF000521">
    <property type="entry name" value="Transaminase_4ab_Lys_Orn"/>
    <property type="match status" value="1"/>
</dbReference>
<dbReference type="SUPFAM" id="SSF53383">
    <property type="entry name" value="PLP-dependent transferases"/>
    <property type="match status" value="1"/>
</dbReference>
<dbReference type="PROSITE" id="PS00600">
    <property type="entry name" value="AA_TRANSFER_CLASS_3"/>
    <property type="match status" value="1"/>
</dbReference>
<keyword id="KW-0032">Aminotransferase</keyword>
<keyword id="KW-0963">Cytoplasm</keyword>
<keyword id="KW-0903">Direct protein sequencing</keyword>
<keyword id="KW-0663">Pyridoxal phosphate</keyword>
<keyword id="KW-0670">Pyruvate</keyword>
<keyword id="KW-0808">Transferase</keyword>
<comment type="function">
    <text evidence="2">Involved in an anaerobic respiration pathway that converts the sulfonate taurine (2-aminoethanesulfonate) to ammonia, acetate and sulfide. Catalyzes the initial metabolic reaction of anaerobic taurine degradation, i.e. the transamination reaction between taurine and pyruvate leading to sulfoacetaldehyde and alanine. Is also able to transaminate hypotaurine (2-aminosulfinate), beta-alanine and with low activity cysteine and 3-aminopropanesulfonate in vitro. In addition to pyruvate, 2-oxobutyrate and oxaloacetate can also be used as amino group acceptors.</text>
</comment>
<comment type="catalytic activity">
    <reaction evidence="2">
        <text>taurine + pyruvate = sulfoacetaldehyde + L-alanine</text>
        <dbReference type="Rhea" id="RHEA:10420"/>
        <dbReference type="ChEBI" id="CHEBI:15361"/>
        <dbReference type="ChEBI" id="CHEBI:57972"/>
        <dbReference type="ChEBI" id="CHEBI:58246"/>
        <dbReference type="ChEBI" id="CHEBI:507393"/>
        <dbReference type="EC" id="2.6.1.77"/>
    </reaction>
    <physiologicalReaction direction="left-to-right" evidence="5">
        <dbReference type="Rhea" id="RHEA:10421"/>
    </physiologicalReaction>
</comment>
<comment type="catalytic activity">
    <reaction evidence="2">
        <text>hypotaurine + pyruvate = 2-sulfinoacetaldehyde + L-alanine</text>
        <dbReference type="Rhea" id="RHEA:58056"/>
        <dbReference type="ChEBI" id="CHEBI:15361"/>
        <dbReference type="ChEBI" id="CHEBI:57853"/>
        <dbReference type="ChEBI" id="CHEBI:57972"/>
        <dbReference type="ChEBI" id="CHEBI:142501"/>
        <dbReference type="EC" id="2.6.1.77"/>
    </reaction>
</comment>
<comment type="catalytic activity">
    <reaction evidence="2">
        <text>3-oxopropanoate + L-alanine = beta-alanine + pyruvate</text>
        <dbReference type="Rhea" id="RHEA:14077"/>
        <dbReference type="ChEBI" id="CHEBI:15361"/>
        <dbReference type="ChEBI" id="CHEBI:33190"/>
        <dbReference type="ChEBI" id="CHEBI:57966"/>
        <dbReference type="ChEBI" id="CHEBI:57972"/>
    </reaction>
</comment>
<comment type="cofactor">
    <cofactor evidence="2">
        <name>pyridoxal 5'-phosphate</name>
        <dbReference type="ChEBI" id="CHEBI:597326"/>
    </cofactor>
</comment>
<comment type="biophysicochemical properties">
    <kinetics>
        <KM evidence="2">7.1 mM for taurine</KM>
        <KM evidence="2">0.82 mM for pyruvate</KM>
        <KM evidence="2">8.1 mM for hypotaurine</KM>
    </kinetics>
    <phDependence>
        <text evidence="2">Optimum pH is 9.0.</text>
    </phDependence>
    <temperatureDependence>
        <text evidence="2">Optimum temperature is 35 degrees Celsius.</text>
    </temperatureDependence>
</comment>
<comment type="pathway">
    <text evidence="2">Organosulfur degradation; alkanesulfonate degradation.</text>
</comment>
<comment type="subunit">
    <text evidence="2">Homotetramer.</text>
</comment>
<comment type="subcellular location">
    <subcellularLocation>
        <location evidence="2">Cytoplasm</location>
    </subcellularLocation>
</comment>
<comment type="miscellaneous">
    <text evidence="4">Taurine is an abundant dietary and host-derived molecule whose metabolism to hydrogen sulfide (H2S) by members of the human gut microbiota has many prominent connections to host health and disease. The human gut bacterium and opportunistic pathogen Bilophila wadsworthia produces H2S when respiring sulfite (HSO3-) released from organosulfonate substrates such as taurine and isethionate.</text>
</comment>
<comment type="similarity">
    <text evidence="4">Belongs to the class-III pyridoxal-phosphate-dependent aminotransferase family.</text>
</comment>